<accession>Q9USV2</accession>
<accession>P78934</accession>
<protein>
    <recommendedName>
        <fullName>Uncharacterized oxidoreductase C28F2.05</fullName>
        <ecNumber>1.-.-.-</ecNumber>
    </recommendedName>
</protein>
<sequence length="276" mass="32046">MKPFSPSQTNFEKEQLCFGVYQLKDCYQQVIEALSLGIRVIDSAITYRNEKECEQAIQDFCHQNVNIKREDITLITKIPDSLQGFERTWKAVEQSLRRTGRPKLDVVLIHSPKWPVRRIESWRALLQHQKEGRINKIGVSNYNIHHLEEIISLGLPLPAINQVEFSAFNNRPTFLSYCFNHGILVQAFSPLTRGYRLSDIRLLDLSLKYNKTPANILLRYCLQKGVSPIFKASSFVHIHENVKAEQFMLDPSDMDVMDTWDEEFVSKPTWNPIILP</sequence>
<dbReference type="EC" id="1.-.-.-"/>
<dbReference type="EMBL" id="D83992">
    <property type="protein sequence ID" value="BAA12182.1"/>
    <property type="molecule type" value="Genomic_DNA"/>
</dbReference>
<dbReference type="EMBL" id="CU329671">
    <property type="protein sequence ID" value="CAB57934.1"/>
    <property type="molecule type" value="Genomic_DNA"/>
</dbReference>
<dbReference type="PIR" id="T40048">
    <property type="entry name" value="T40048"/>
</dbReference>
<dbReference type="RefSeq" id="NP_595666.1">
    <property type="nucleotide sequence ID" value="NM_001021561.2"/>
</dbReference>
<dbReference type="SMR" id="Q9USV2"/>
<dbReference type="BioGRID" id="277088">
    <property type="interactions" value="5"/>
</dbReference>
<dbReference type="FunCoup" id="Q9USV2">
    <property type="interactions" value="415"/>
</dbReference>
<dbReference type="STRING" id="284812.Q9USV2"/>
<dbReference type="PaxDb" id="4896-SPBC28F2.05c.1"/>
<dbReference type="EnsemblFungi" id="SPBC28F2.05c.1">
    <property type="protein sequence ID" value="SPBC28F2.05c.1:pep"/>
    <property type="gene ID" value="SPBC28F2.05c"/>
</dbReference>
<dbReference type="KEGG" id="spo:2540561"/>
<dbReference type="PomBase" id="SPBC28F2.05c"/>
<dbReference type="VEuPathDB" id="FungiDB:SPBC28F2.05c"/>
<dbReference type="eggNOG" id="KOG1577">
    <property type="taxonomic scope" value="Eukaryota"/>
</dbReference>
<dbReference type="HOGENOM" id="CLU_023205_0_1_1"/>
<dbReference type="InParanoid" id="Q9USV2"/>
<dbReference type="OMA" id="IYAPVCW"/>
<dbReference type="PhylomeDB" id="Q9USV2"/>
<dbReference type="PRO" id="PR:Q9USV2"/>
<dbReference type="Proteomes" id="UP000002485">
    <property type="component" value="Chromosome II"/>
</dbReference>
<dbReference type="GO" id="GO:0005829">
    <property type="term" value="C:cytosol"/>
    <property type="evidence" value="ECO:0007005"/>
    <property type="project" value="PomBase"/>
</dbReference>
<dbReference type="GO" id="GO:0005634">
    <property type="term" value="C:nucleus"/>
    <property type="evidence" value="ECO:0007005"/>
    <property type="project" value="PomBase"/>
</dbReference>
<dbReference type="GO" id="GO:0004032">
    <property type="term" value="F:aldose reductase (NADPH) activity"/>
    <property type="evidence" value="ECO:0000318"/>
    <property type="project" value="GO_Central"/>
</dbReference>
<dbReference type="GO" id="GO:0032867">
    <property type="term" value="F:L-arabinose reductase (NADPH) activity"/>
    <property type="evidence" value="ECO:0000266"/>
    <property type="project" value="PomBase"/>
</dbReference>
<dbReference type="GO" id="GO:0019568">
    <property type="term" value="P:arabinose catabolic process"/>
    <property type="evidence" value="ECO:0000266"/>
    <property type="project" value="PomBase"/>
</dbReference>
<dbReference type="CDD" id="cd19071">
    <property type="entry name" value="AKR_AKR1-5-like"/>
    <property type="match status" value="1"/>
</dbReference>
<dbReference type="Gene3D" id="3.20.20.100">
    <property type="entry name" value="NADP-dependent oxidoreductase domain"/>
    <property type="match status" value="1"/>
</dbReference>
<dbReference type="InterPro" id="IPR020471">
    <property type="entry name" value="AKR"/>
</dbReference>
<dbReference type="InterPro" id="IPR023210">
    <property type="entry name" value="NADP_OxRdtase_dom"/>
</dbReference>
<dbReference type="InterPro" id="IPR036812">
    <property type="entry name" value="NADP_OxRdtase_dom_sf"/>
</dbReference>
<dbReference type="PANTHER" id="PTHR43827">
    <property type="entry name" value="2,5-DIKETO-D-GLUCONIC ACID REDUCTASE"/>
    <property type="match status" value="1"/>
</dbReference>
<dbReference type="PANTHER" id="PTHR43827:SF13">
    <property type="entry name" value="ALDO_KETO REDUCTASE FAMILY PROTEIN"/>
    <property type="match status" value="1"/>
</dbReference>
<dbReference type="Pfam" id="PF00248">
    <property type="entry name" value="Aldo_ket_red"/>
    <property type="match status" value="1"/>
</dbReference>
<dbReference type="PIRSF" id="PIRSF000097">
    <property type="entry name" value="AKR"/>
    <property type="match status" value="1"/>
</dbReference>
<dbReference type="PRINTS" id="PR00069">
    <property type="entry name" value="ALDKETRDTASE"/>
</dbReference>
<dbReference type="SUPFAM" id="SSF51430">
    <property type="entry name" value="NAD(P)-linked oxidoreductase"/>
    <property type="match status" value="1"/>
</dbReference>
<proteinExistence type="inferred from homology"/>
<organism>
    <name type="scientific">Schizosaccharomyces pombe (strain 972 / ATCC 24843)</name>
    <name type="common">Fission yeast</name>
    <dbReference type="NCBI Taxonomy" id="284812"/>
    <lineage>
        <taxon>Eukaryota</taxon>
        <taxon>Fungi</taxon>
        <taxon>Dikarya</taxon>
        <taxon>Ascomycota</taxon>
        <taxon>Taphrinomycotina</taxon>
        <taxon>Schizosaccharomycetes</taxon>
        <taxon>Schizosaccharomycetales</taxon>
        <taxon>Schizosaccharomycetaceae</taxon>
        <taxon>Schizosaccharomyces</taxon>
    </lineage>
</organism>
<name>YHH5_SCHPO</name>
<gene>
    <name type="ORF">SPBC28F2.05c</name>
</gene>
<comment type="subcellular location">
    <subcellularLocation>
        <location evidence="2">Cytoplasm</location>
    </subcellularLocation>
    <subcellularLocation>
        <location evidence="2">Nucleus</location>
    </subcellularLocation>
</comment>
<comment type="similarity">
    <text evidence="3">Belongs to the aldo/keto reductase family.</text>
</comment>
<keyword id="KW-0963">Cytoplasm</keyword>
<keyword id="KW-0539">Nucleus</keyword>
<keyword id="KW-0560">Oxidoreductase</keyword>
<keyword id="KW-1185">Reference proteome</keyword>
<evidence type="ECO:0000250" key="1"/>
<evidence type="ECO:0000269" key="2">
    <source>
    </source>
</evidence>
<evidence type="ECO:0000305" key="3"/>
<feature type="chain" id="PRO_0000310313" description="Uncharacterized oxidoreductase C28F2.05">
    <location>
        <begin position="1"/>
        <end position="276"/>
    </location>
</feature>
<feature type="active site" description="Proton donor" evidence="1">
    <location>
        <position position="47"/>
    </location>
</feature>
<feature type="binding site" evidence="1">
    <location>
        <position position="110"/>
    </location>
    <ligand>
        <name>substrate</name>
    </ligand>
</feature>
<feature type="site" description="Lowers pKa of active site Tyr" evidence="1">
    <location>
        <position position="77"/>
    </location>
</feature>
<feature type="sequence conflict" description="In Ref. 1; BAA12182." evidence="3" ref="1">
    <original>F</original>
    <variation>S</variation>
    <location>
        <position position="230"/>
    </location>
</feature>
<reference key="1">
    <citation type="submission" date="1996-03" db="EMBL/GenBank/DDBJ databases">
        <title>S.pombe chromosome II cosmid 1228 sequence.</title>
        <authorList>
            <person name="Kohnosu A."/>
            <person name="Niwa O."/>
            <person name="Yano M."/>
            <person name="Saitoh S."/>
            <person name="Katayama T."/>
            <person name="Nagao K."/>
            <person name="Yanagida M."/>
        </authorList>
    </citation>
    <scope>NUCLEOTIDE SEQUENCE [GENOMIC DNA]</scope>
    <source>
        <strain>972 / ATCC 24843</strain>
    </source>
</reference>
<reference key="2">
    <citation type="journal article" date="2002" name="Nature">
        <title>The genome sequence of Schizosaccharomyces pombe.</title>
        <authorList>
            <person name="Wood V."/>
            <person name="Gwilliam R."/>
            <person name="Rajandream M.A."/>
            <person name="Lyne M.H."/>
            <person name="Lyne R."/>
            <person name="Stewart A."/>
            <person name="Sgouros J.G."/>
            <person name="Peat N."/>
            <person name="Hayles J."/>
            <person name="Baker S.G."/>
            <person name="Basham D."/>
            <person name="Bowman S."/>
            <person name="Brooks K."/>
            <person name="Brown D."/>
            <person name="Brown S."/>
            <person name="Chillingworth T."/>
            <person name="Churcher C.M."/>
            <person name="Collins M."/>
            <person name="Connor R."/>
            <person name="Cronin A."/>
            <person name="Davis P."/>
            <person name="Feltwell T."/>
            <person name="Fraser A."/>
            <person name="Gentles S."/>
            <person name="Goble A."/>
            <person name="Hamlin N."/>
            <person name="Harris D.E."/>
            <person name="Hidalgo J."/>
            <person name="Hodgson G."/>
            <person name="Holroyd S."/>
            <person name="Hornsby T."/>
            <person name="Howarth S."/>
            <person name="Huckle E.J."/>
            <person name="Hunt S."/>
            <person name="Jagels K."/>
            <person name="James K.D."/>
            <person name="Jones L."/>
            <person name="Jones M."/>
            <person name="Leather S."/>
            <person name="McDonald S."/>
            <person name="McLean J."/>
            <person name="Mooney P."/>
            <person name="Moule S."/>
            <person name="Mungall K.L."/>
            <person name="Murphy L.D."/>
            <person name="Niblett D."/>
            <person name="Odell C."/>
            <person name="Oliver K."/>
            <person name="O'Neil S."/>
            <person name="Pearson D."/>
            <person name="Quail M.A."/>
            <person name="Rabbinowitsch E."/>
            <person name="Rutherford K.M."/>
            <person name="Rutter S."/>
            <person name="Saunders D."/>
            <person name="Seeger K."/>
            <person name="Sharp S."/>
            <person name="Skelton J."/>
            <person name="Simmonds M.N."/>
            <person name="Squares R."/>
            <person name="Squares S."/>
            <person name="Stevens K."/>
            <person name="Taylor K."/>
            <person name="Taylor R.G."/>
            <person name="Tivey A."/>
            <person name="Walsh S.V."/>
            <person name="Warren T."/>
            <person name="Whitehead S."/>
            <person name="Woodward J.R."/>
            <person name="Volckaert G."/>
            <person name="Aert R."/>
            <person name="Robben J."/>
            <person name="Grymonprez B."/>
            <person name="Weltjens I."/>
            <person name="Vanstreels E."/>
            <person name="Rieger M."/>
            <person name="Schaefer M."/>
            <person name="Mueller-Auer S."/>
            <person name="Gabel C."/>
            <person name="Fuchs M."/>
            <person name="Duesterhoeft A."/>
            <person name="Fritzc C."/>
            <person name="Holzer E."/>
            <person name="Moestl D."/>
            <person name="Hilbert H."/>
            <person name="Borzym K."/>
            <person name="Langer I."/>
            <person name="Beck A."/>
            <person name="Lehrach H."/>
            <person name="Reinhardt R."/>
            <person name="Pohl T.M."/>
            <person name="Eger P."/>
            <person name="Zimmermann W."/>
            <person name="Wedler H."/>
            <person name="Wambutt R."/>
            <person name="Purnelle B."/>
            <person name="Goffeau A."/>
            <person name="Cadieu E."/>
            <person name="Dreano S."/>
            <person name="Gloux S."/>
            <person name="Lelaure V."/>
            <person name="Mottier S."/>
            <person name="Galibert F."/>
            <person name="Aves S.J."/>
            <person name="Xiang Z."/>
            <person name="Hunt C."/>
            <person name="Moore K."/>
            <person name="Hurst S.M."/>
            <person name="Lucas M."/>
            <person name="Rochet M."/>
            <person name="Gaillardin C."/>
            <person name="Tallada V.A."/>
            <person name="Garzon A."/>
            <person name="Thode G."/>
            <person name="Daga R.R."/>
            <person name="Cruzado L."/>
            <person name="Jimenez J."/>
            <person name="Sanchez M."/>
            <person name="del Rey F."/>
            <person name="Benito J."/>
            <person name="Dominguez A."/>
            <person name="Revuelta J.L."/>
            <person name="Moreno S."/>
            <person name="Armstrong J."/>
            <person name="Forsburg S.L."/>
            <person name="Cerutti L."/>
            <person name="Lowe T."/>
            <person name="McCombie W.R."/>
            <person name="Paulsen I."/>
            <person name="Potashkin J."/>
            <person name="Shpakovski G.V."/>
            <person name="Ussery D."/>
            <person name="Barrell B.G."/>
            <person name="Nurse P."/>
        </authorList>
    </citation>
    <scope>NUCLEOTIDE SEQUENCE [LARGE SCALE GENOMIC DNA]</scope>
    <source>
        <strain>972 / ATCC 24843</strain>
    </source>
</reference>
<reference key="3">
    <citation type="journal article" date="2006" name="Nat. Biotechnol.">
        <title>ORFeome cloning and global analysis of protein localization in the fission yeast Schizosaccharomyces pombe.</title>
        <authorList>
            <person name="Matsuyama A."/>
            <person name="Arai R."/>
            <person name="Yashiroda Y."/>
            <person name="Shirai A."/>
            <person name="Kamata A."/>
            <person name="Sekido S."/>
            <person name="Kobayashi Y."/>
            <person name="Hashimoto A."/>
            <person name="Hamamoto M."/>
            <person name="Hiraoka Y."/>
            <person name="Horinouchi S."/>
            <person name="Yoshida M."/>
        </authorList>
    </citation>
    <scope>SUBCELLULAR LOCATION [LARGE SCALE ANALYSIS]</scope>
</reference>